<feature type="chain" id="PRO_0000327465" description="COMM domain-containing protein 5">
    <location>
        <begin position="1"/>
        <end position="205"/>
    </location>
</feature>
<feature type="domain" description="COMM" evidence="2">
    <location>
        <begin position="130"/>
        <end position="194"/>
    </location>
</feature>
<sequence>MIPVCQKFEQTFIKDILSLLVLYMKTKMINLVKKEEEDKLNQITESIHDKLTVSSNDNKVDPNLSSIVFTGLYYILKVALKKKVSNQIFVADITDLKLPQNLITDLTNIYNTQSKDLAERSNNDKILFPQLSSFKWRVDVIISSSFTSRVLNPVILMEMNDTNGKSKVFEVSIDNFHKLRYNAAKLLKDLEDLEQIQILSKLENK</sequence>
<organism>
    <name type="scientific">Dictyostelium discoideum</name>
    <name type="common">Social amoeba</name>
    <dbReference type="NCBI Taxonomy" id="44689"/>
    <lineage>
        <taxon>Eukaryota</taxon>
        <taxon>Amoebozoa</taxon>
        <taxon>Evosea</taxon>
        <taxon>Eumycetozoa</taxon>
        <taxon>Dictyostelia</taxon>
        <taxon>Dictyosteliales</taxon>
        <taxon>Dictyosteliaceae</taxon>
        <taxon>Dictyostelium</taxon>
    </lineage>
</organism>
<comment type="function">
    <text evidence="1">Scaffold protein in the commander complex that is essential for endosomal recycling of transmembrane cargos; the commander complex is composed of the CCC subcomplex and the retriever subcomplex.</text>
</comment>
<comment type="subunit">
    <text evidence="1">Component of the commander complex consisting of the CCC subcomplex and the retriever subcomplex (By similarity). Component of the CCC subcomplex (By similarity).</text>
</comment>
<comment type="similarity">
    <text evidence="3">Belongs to the COMM domain-containing protein 5 family.</text>
</comment>
<name>COMD5_DICDI</name>
<dbReference type="EMBL" id="AAFI02000012">
    <property type="protein sequence ID" value="EAL70288.1"/>
    <property type="molecule type" value="Genomic_DNA"/>
</dbReference>
<dbReference type="RefSeq" id="XP_643905.1">
    <property type="nucleotide sequence ID" value="XM_638813.1"/>
</dbReference>
<dbReference type="SMR" id="Q86IW8"/>
<dbReference type="FunCoup" id="Q86IW8">
    <property type="interactions" value="118"/>
</dbReference>
<dbReference type="STRING" id="44689.Q86IW8"/>
<dbReference type="PaxDb" id="44689-DDB0266456"/>
<dbReference type="EnsemblProtists" id="EAL70288">
    <property type="protein sequence ID" value="EAL70288"/>
    <property type="gene ID" value="DDB_G0274791"/>
</dbReference>
<dbReference type="GeneID" id="8619332"/>
<dbReference type="KEGG" id="ddi:DDB_G0274791"/>
<dbReference type="dictyBase" id="DDB_G0274791">
    <property type="gene designation" value="commd5"/>
</dbReference>
<dbReference type="VEuPathDB" id="AmoebaDB:DDB_G0274791"/>
<dbReference type="eggNOG" id="ENOG502RD36">
    <property type="taxonomic scope" value="Eukaryota"/>
</dbReference>
<dbReference type="HOGENOM" id="CLU_091901_1_0_1"/>
<dbReference type="InParanoid" id="Q86IW8"/>
<dbReference type="OMA" id="IQRTKFN"/>
<dbReference type="PhylomeDB" id="Q86IW8"/>
<dbReference type="Reactome" id="R-DDI-8951664">
    <property type="pathway name" value="Neddylation"/>
</dbReference>
<dbReference type="PRO" id="PR:Q86IW8"/>
<dbReference type="Proteomes" id="UP000002195">
    <property type="component" value="Chromosome 2"/>
</dbReference>
<dbReference type="GO" id="GO:0005634">
    <property type="term" value="C:nucleus"/>
    <property type="evidence" value="ECO:0000318"/>
    <property type="project" value="GO_Central"/>
</dbReference>
<dbReference type="InterPro" id="IPR017920">
    <property type="entry name" value="COMM"/>
</dbReference>
<dbReference type="InterPro" id="IPR037357">
    <property type="entry name" value="COMMD5"/>
</dbReference>
<dbReference type="PANTHER" id="PTHR15666">
    <property type="entry name" value="COMM DOMAIN CONTAINING PROTEIN 5"/>
    <property type="match status" value="1"/>
</dbReference>
<dbReference type="PANTHER" id="PTHR15666:SF1">
    <property type="entry name" value="COMM DOMAIN-CONTAINING PROTEIN 5"/>
    <property type="match status" value="1"/>
</dbReference>
<dbReference type="Pfam" id="PF07258">
    <property type="entry name" value="COMM_domain"/>
    <property type="match status" value="1"/>
</dbReference>
<dbReference type="PROSITE" id="PS51269">
    <property type="entry name" value="COMM"/>
    <property type="match status" value="1"/>
</dbReference>
<gene>
    <name type="primary">commd5</name>
    <name type="ORF">DDB_G0274791</name>
</gene>
<evidence type="ECO:0000250" key="1">
    <source>
        <dbReference type="UniProtKB" id="Q9GZQ3"/>
    </source>
</evidence>
<evidence type="ECO:0000255" key="2">
    <source>
        <dbReference type="PROSITE-ProRule" id="PRU00602"/>
    </source>
</evidence>
<evidence type="ECO:0000305" key="3"/>
<reference key="1">
    <citation type="journal article" date="2002" name="Nature">
        <title>Sequence and analysis of chromosome 2 of Dictyostelium discoideum.</title>
        <authorList>
            <person name="Gloeckner G."/>
            <person name="Eichinger L."/>
            <person name="Szafranski K."/>
            <person name="Pachebat J.A."/>
            <person name="Bankier A.T."/>
            <person name="Dear P.H."/>
            <person name="Lehmann R."/>
            <person name="Baumgart C."/>
            <person name="Parra G."/>
            <person name="Abril J.F."/>
            <person name="Guigo R."/>
            <person name="Kumpf K."/>
            <person name="Tunggal B."/>
            <person name="Cox E.C."/>
            <person name="Quail M.A."/>
            <person name="Platzer M."/>
            <person name="Rosenthal A."/>
            <person name="Noegel A.A."/>
        </authorList>
    </citation>
    <scope>NUCLEOTIDE SEQUENCE [LARGE SCALE GENOMIC DNA]</scope>
    <source>
        <strain>AX4</strain>
    </source>
</reference>
<reference key="2">
    <citation type="journal article" date="2005" name="Nature">
        <title>The genome of the social amoeba Dictyostelium discoideum.</title>
        <authorList>
            <person name="Eichinger L."/>
            <person name="Pachebat J.A."/>
            <person name="Gloeckner G."/>
            <person name="Rajandream M.A."/>
            <person name="Sucgang R."/>
            <person name="Berriman M."/>
            <person name="Song J."/>
            <person name="Olsen R."/>
            <person name="Szafranski K."/>
            <person name="Xu Q."/>
            <person name="Tunggal B."/>
            <person name="Kummerfeld S."/>
            <person name="Madera M."/>
            <person name="Konfortov B.A."/>
            <person name="Rivero F."/>
            <person name="Bankier A.T."/>
            <person name="Lehmann R."/>
            <person name="Hamlin N."/>
            <person name="Davies R."/>
            <person name="Gaudet P."/>
            <person name="Fey P."/>
            <person name="Pilcher K."/>
            <person name="Chen G."/>
            <person name="Saunders D."/>
            <person name="Sodergren E.J."/>
            <person name="Davis P."/>
            <person name="Kerhornou A."/>
            <person name="Nie X."/>
            <person name="Hall N."/>
            <person name="Anjard C."/>
            <person name="Hemphill L."/>
            <person name="Bason N."/>
            <person name="Farbrother P."/>
            <person name="Desany B."/>
            <person name="Just E."/>
            <person name="Morio T."/>
            <person name="Rost R."/>
            <person name="Churcher C.M."/>
            <person name="Cooper J."/>
            <person name="Haydock S."/>
            <person name="van Driessche N."/>
            <person name="Cronin A."/>
            <person name="Goodhead I."/>
            <person name="Muzny D.M."/>
            <person name="Mourier T."/>
            <person name="Pain A."/>
            <person name="Lu M."/>
            <person name="Harper D."/>
            <person name="Lindsay R."/>
            <person name="Hauser H."/>
            <person name="James K.D."/>
            <person name="Quiles M."/>
            <person name="Madan Babu M."/>
            <person name="Saito T."/>
            <person name="Buchrieser C."/>
            <person name="Wardroper A."/>
            <person name="Felder M."/>
            <person name="Thangavelu M."/>
            <person name="Johnson D."/>
            <person name="Knights A."/>
            <person name="Loulseged H."/>
            <person name="Mungall K.L."/>
            <person name="Oliver K."/>
            <person name="Price C."/>
            <person name="Quail M.A."/>
            <person name="Urushihara H."/>
            <person name="Hernandez J."/>
            <person name="Rabbinowitsch E."/>
            <person name="Steffen D."/>
            <person name="Sanders M."/>
            <person name="Ma J."/>
            <person name="Kohara Y."/>
            <person name="Sharp S."/>
            <person name="Simmonds M.N."/>
            <person name="Spiegler S."/>
            <person name="Tivey A."/>
            <person name="Sugano S."/>
            <person name="White B."/>
            <person name="Walker D."/>
            <person name="Woodward J.R."/>
            <person name="Winckler T."/>
            <person name="Tanaka Y."/>
            <person name="Shaulsky G."/>
            <person name="Schleicher M."/>
            <person name="Weinstock G.M."/>
            <person name="Rosenthal A."/>
            <person name="Cox E.C."/>
            <person name="Chisholm R.L."/>
            <person name="Gibbs R.A."/>
            <person name="Loomis W.F."/>
            <person name="Platzer M."/>
            <person name="Kay R.R."/>
            <person name="Williams J.G."/>
            <person name="Dear P.H."/>
            <person name="Noegel A.A."/>
            <person name="Barrell B.G."/>
            <person name="Kuspa A."/>
        </authorList>
    </citation>
    <scope>NUCLEOTIDE SEQUENCE [LARGE SCALE GENOMIC DNA]</scope>
    <source>
        <strain>AX4</strain>
    </source>
</reference>
<keyword id="KW-1185">Reference proteome</keyword>
<accession>Q86IW8</accession>
<accession>Q556A5</accession>
<proteinExistence type="inferred from homology"/>
<protein>
    <recommendedName>
        <fullName>COMM domain-containing protein 5</fullName>
    </recommendedName>
</protein>